<comment type="function">
    <text evidence="1">Catalyzes the specific phosphorylation of the 3-hydroxyl group of shikimic acid using ATP as a cosubstrate.</text>
</comment>
<comment type="catalytic activity">
    <reaction evidence="1">
        <text>shikimate + ATP = 3-phosphoshikimate + ADP + H(+)</text>
        <dbReference type="Rhea" id="RHEA:13121"/>
        <dbReference type="ChEBI" id="CHEBI:15378"/>
        <dbReference type="ChEBI" id="CHEBI:30616"/>
        <dbReference type="ChEBI" id="CHEBI:36208"/>
        <dbReference type="ChEBI" id="CHEBI:145989"/>
        <dbReference type="ChEBI" id="CHEBI:456216"/>
        <dbReference type="EC" id="2.7.1.71"/>
    </reaction>
</comment>
<comment type="cofactor">
    <cofactor evidence="1">
        <name>Mg(2+)</name>
        <dbReference type="ChEBI" id="CHEBI:18420"/>
    </cofactor>
    <text evidence="1">Binds 1 Mg(2+) ion per subunit.</text>
</comment>
<comment type="pathway">
    <text evidence="1">Metabolic intermediate biosynthesis; chorismate biosynthesis; chorismate from D-erythrose 4-phosphate and phosphoenolpyruvate: step 5/7.</text>
</comment>
<comment type="subunit">
    <text evidence="1">Monomer.</text>
</comment>
<comment type="subcellular location">
    <subcellularLocation>
        <location evidence="1">Cytoplasm</location>
    </subcellularLocation>
</comment>
<comment type="similarity">
    <text evidence="1">Belongs to the shikimate kinase family.</text>
</comment>
<sequence>MNPAPNLVMVGPMGAGKSCIGRRLAERFGLEFVDVDQAIVEQVGSSIPAIFEQHGEARFRQHEAETLQALLEQDNKLISTGGGAVLDPRNRERICARGFVVYLHVSVPAQLTRLARDRNRPLLQRADREQVLHAMAAHRTPLYHQVADLSLETDHLSPAEATAQLVLRLAAQWRMSSNPA</sequence>
<organism>
    <name type="scientific">Xanthomonas axonopodis pv. citri (strain 306)</name>
    <dbReference type="NCBI Taxonomy" id="190486"/>
    <lineage>
        <taxon>Bacteria</taxon>
        <taxon>Pseudomonadati</taxon>
        <taxon>Pseudomonadota</taxon>
        <taxon>Gammaproteobacteria</taxon>
        <taxon>Lysobacterales</taxon>
        <taxon>Lysobacteraceae</taxon>
        <taxon>Xanthomonas</taxon>
    </lineage>
</organism>
<keyword id="KW-0028">Amino-acid biosynthesis</keyword>
<keyword id="KW-0057">Aromatic amino acid biosynthesis</keyword>
<keyword id="KW-0067">ATP-binding</keyword>
<keyword id="KW-0963">Cytoplasm</keyword>
<keyword id="KW-0418">Kinase</keyword>
<keyword id="KW-0460">Magnesium</keyword>
<keyword id="KW-0479">Metal-binding</keyword>
<keyword id="KW-0547">Nucleotide-binding</keyword>
<keyword id="KW-0808">Transferase</keyword>
<protein>
    <recommendedName>
        <fullName evidence="1">Shikimate kinase</fullName>
        <shortName evidence="1">SK</shortName>
        <ecNumber evidence="1">2.7.1.71</ecNumber>
    </recommendedName>
</protein>
<reference key="1">
    <citation type="journal article" date="2002" name="Nature">
        <title>Comparison of the genomes of two Xanthomonas pathogens with differing host specificities.</title>
        <authorList>
            <person name="da Silva A.C.R."/>
            <person name="Ferro J.A."/>
            <person name="Reinach F.C."/>
            <person name="Farah C.S."/>
            <person name="Furlan L.R."/>
            <person name="Quaggio R.B."/>
            <person name="Monteiro-Vitorello C.B."/>
            <person name="Van Sluys M.A."/>
            <person name="Almeida N.F. Jr."/>
            <person name="Alves L.M.C."/>
            <person name="do Amaral A.M."/>
            <person name="Bertolini M.C."/>
            <person name="Camargo L.E.A."/>
            <person name="Camarotte G."/>
            <person name="Cannavan F."/>
            <person name="Cardozo J."/>
            <person name="Chambergo F."/>
            <person name="Ciapina L.P."/>
            <person name="Cicarelli R.M.B."/>
            <person name="Coutinho L.L."/>
            <person name="Cursino-Santos J.R."/>
            <person name="El-Dorry H."/>
            <person name="Faria J.B."/>
            <person name="Ferreira A.J.S."/>
            <person name="Ferreira R.C.C."/>
            <person name="Ferro M.I.T."/>
            <person name="Formighieri E.F."/>
            <person name="Franco M.C."/>
            <person name="Greggio C.C."/>
            <person name="Gruber A."/>
            <person name="Katsuyama A.M."/>
            <person name="Kishi L.T."/>
            <person name="Leite R.P."/>
            <person name="Lemos E.G.M."/>
            <person name="Lemos M.V.F."/>
            <person name="Locali E.C."/>
            <person name="Machado M.A."/>
            <person name="Madeira A.M.B.N."/>
            <person name="Martinez-Rossi N.M."/>
            <person name="Martins E.C."/>
            <person name="Meidanis J."/>
            <person name="Menck C.F.M."/>
            <person name="Miyaki C.Y."/>
            <person name="Moon D.H."/>
            <person name="Moreira L.M."/>
            <person name="Novo M.T.M."/>
            <person name="Okura V.K."/>
            <person name="Oliveira M.C."/>
            <person name="Oliveira V.R."/>
            <person name="Pereira H.A."/>
            <person name="Rossi A."/>
            <person name="Sena J.A.D."/>
            <person name="Silva C."/>
            <person name="de Souza R.F."/>
            <person name="Spinola L.A.F."/>
            <person name="Takita M.A."/>
            <person name="Tamura R.E."/>
            <person name="Teixeira E.C."/>
            <person name="Tezza R.I.D."/>
            <person name="Trindade dos Santos M."/>
            <person name="Truffi D."/>
            <person name="Tsai S.M."/>
            <person name="White F.F."/>
            <person name="Setubal J.C."/>
            <person name="Kitajima J.P."/>
        </authorList>
    </citation>
    <scope>NUCLEOTIDE SEQUENCE [LARGE SCALE GENOMIC DNA]</scope>
    <source>
        <strain>306</strain>
    </source>
</reference>
<name>AROK_XANAC</name>
<accession>Q8PI88</accession>
<dbReference type="EC" id="2.7.1.71" evidence="1"/>
<dbReference type="EMBL" id="AE008923">
    <property type="protein sequence ID" value="AAM37855.1"/>
    <property type="molecule type" value="Genomic_DNA"/>
</dbReference>
<dbReference type="RefSeq" id="WP_005917545.1">
    <property type="nucleotide sequence ID" value="NC_003919.1"/>
</dbReference>
<dbReference type="SMR" id="Q8PI88"/>
<dbReference type="KEGG" id="xac:XAC3010"/>
<dbReference type="eggNOG" id="COG0703">
    <property type="taxonomic scope" value="Bacteria"/>
</dbReference>
<dbReference type="HOGENOM" id="CLU_057607_3_2_6"/>
<dbReference type="UniPathway" id="UPA00053">
    <property type="reaction ID" value="UER00088"/>
</dbReference>
<dbReference type="Proteomes" id="UP000000576">
    <property type="component" value="Chromosome"/>
</dbReference>
<dbReference type="GO" id="GO:0005829">
    <property type="term" value="C:cytosol"/>
    <property type="evidence" value="ECO:0007669"/>
    <property type="project" value="TreeGrafter"/>
</dbReference>
<dbReference type="GO" id="GO:0005524">
    <property type="term" value="F:ATP binding"/>
    <property type="evidence" value="ECO:0007669"/>
    <property type="project" value="UniProtKB-UniRule"/>
</dbReference>
<dbReference type="GO" id="GO:0000287">
    <property type="term" value="F:magnesium ion binding"/>
    <property type="evidence" value="ECO:0007669"/>
    <property type="project" value="UniProtKB-UniRule"/>
</dbReference>
<dbReference type="GO" id="GO:0004765">
    <property type="term" value="F:shikimate kinase activity"/>
    <property type="evidence" value="ECO:0007669"/>
    <property type="project" value="UniProtKB-UniRule"/>
</dbReference>
<dbReference type="GO" id="GO:0008652">
    <property type="term" value="P:amino acid biosynthetic process"/>
    <property type="evidence" value="ECO:0007669"/>
    <property type="project" value="UniProtKB-KW"/>
</dbReference>
<dbReference type="GO" id="GO:0009073">
    <property type="term" value="P:aromatic amino acid family biosynthetic process"/>
    <property type="evidence" value="ECO:0007669"/>
    <property type="project" value="UniProtKB-KW"/>
</dbReference>
<dbReference type="GO" id="GO:0009423">
    <property type="term" value="P:chorismate biosynthetic process"/>
    <property type="evidence" value="ECO:0007669"/>
    <property type="project" value="UniProtKB-UniRule"/>
</dbReference>
<dbReference type="CDD" id="cd00464">
    <property type="entry name" value="SK"/>
    <property type="match status" value="1"/>
</dbReference>
<dbReference type="Gene3D" id="3.40.50.300">
    <property type="entry name" value="P-loop containing nucleotide triphosphate hydrolases"/>
    <property type="match status" value="1"/>
</dbReference>
<dbReference type="HAMAP" id="MF_00109">
    <property type="entry name" value="Shikimate_kinase"/>
    <property type="match status" value="1"/>
</dbReference>
<dbReference type="InterPro" id="IPR027417">
    <property type="entry name" value="P-loop_NTPase"/>
</dbReference>
<dbReference type="InterPro" id="IPR031322">
    <property type="entry name" value="Shikimate/glucono_kinase"/>
</dbReference>
<dbReference type="InterPro" id="IPR000623">
    <property type="entry name" value="Shikimate_kinase/TSH1"/>
</dbReference>
<dbReference type="InterPro" id="IPR023000">
    <property type="entry name" value="Shikimate_kinase_CS"/>
</dbReference>
<dbReference type="PANTHER" id="PTHR21087">
    <property type="entry name" value="SHIKIMATE KINASE"/>
    <property type="match status" value="1"/>
</dbReference>
<dbReference type="PANTHER" id="PTHR21087:SF16">
    <property type="entry name" value="SHIKIMATE KINASE 1, CHLOROPLASTIC"/>
    <property type="match status" value="1"/>
</dbReference>
<dbReference type="Pfam" id="PF01202">
    <property type="entry name" value="SKI"/>
    <property type="match status" value="1"/>
</dbReference>
<dbReference type="PRINTS" id="PR01100">
    <property type="entry name" value="SHIKIMTKNASE"/>
</dbReference>
<dbReference type="SUPFAM" id="SSF52540">
    <property type="entry name" value="P-loop containing nucleoside triphosphate hydrolases"/>
    <property type="match status" value="1"/>
</dbReference>
<dbReference type="PROSITE" id="PS01128">
    <property type="entry name" value="SHIKIMATE_KINASE"/>
    <property type="match status" value="1"/>
</dbReference>
<evidence type="ECO:0000255" key="1">
    <source>
        <dbReference type="HAMAP-Rule" id="MF_00109"/>
    </source>
</evidence>
<gene>
    <name evidence="1" type="primary">aroK</name>
    <name type="ordered locus">XAC3010</name>
</gene>
<feature type="chain" id="PRO_0000237957" description="Shikimate kinase">
    <location>
        <begin position="1"/>
        <end position="180"/>
    </location>
</feature>
<feature type="binding site" evidence="1">
    <location>
        <begin position="14"/>
        <end position="19"/>
    </location>
    <ligand>
        <name>ATP</name>
        <dbReference type="ChEBI" id="CHEBI:30616"/>
    </ligand>
</feature>
<feature type="binding site" evidence="1">
    <location>
        <position position="18"/>
    </location>
    <ligand>
        <name>Mg(2+)</name>
        <dbReference type="ChEBI" id="CHEBI:18420"/>
    </ligand>
</feature>
<feature type="binding site" evidence="1">
    <location>
        <position position="36"/>
    </location>
    <ligand>
        <name>substrate</name>
    </ligand>
</feature>
<feature type="binding site" evidence="1">
    <location>
        <position position="60"/>
    </location>
    <ligand>
        <name>substrate</name>
    </ligand>
</feature>
<feature type="binding site" evidence="1">
    <location>
        <position position="82"/>
    </location>
    <ligand>
        <name>substrate</name>
    </ligand>
</feature>
<feature type="binding site" evidence="1">
    <location>
        <position position="120"/>
    </location>
    <ligand>
        <name>ATP</name>
        <dbReference type="ChEBI" id="CHEBI:30616"/>
    </ligand>
</feature>
<feature type="binding site" evidence="1">
    <location>
        <position position="139"/>
    </location>
    <ligand>
        <name>substrate</name>
    </ligand>
</feature>
<proteinExistence type="inferred from homology"/>